<reference key="1">
    <citation type="journal article" date="2005" name="Nucleic Acids Res.">
        <title>Genome dynamics and diversity of Shigella species, the etiologic agents of bacillary dysentery.</title>
        <authorList>
            <person name="Yang F."/>
            <person name="Yang J."/>
            <person name="Zhang X."/>
            <person name="Chen L."/>
            <person name="Jiang Y."/>
            <person name="Yan Y."/>
            <person name="Tang X."/>
            <person name="Wang J."/>
            <person name="Xiong Z."/>
            <person name="Dong J."/>
            <person name="Xue Y."/>
            <person name="Zhu Y."/>
            <person name="Xu X."/>
            <person name="Sun L."/>
            <person name="Chen S."/>
            <person name="Nie H."/>
            <person name="Peng J."/>
            <person name="Xu J."/>
            <person name="Wang Y."/>
            <person name="Yuan Z."/>
            <person name="Wen Y."/>
            <person name="Yao Z."/>
            <person name="Shen Y."/>
            <person name="Qiang B."/>
            <person name="Hou Y."/>
            <person name="Yu J."/>
            <person name="Jin Q."/>
        </authorList>
    </citation>
    <scope>NUCLEOTIDE SEQUENCE [LARGE SCALE GENOMIC DNA]</scope>
    <source>
        <strain>Sb227</strain>
    </source>
</reference>
<sequence>MSFNTIIDWNSCTAEQQRQLLMRPAISASESITRTVNDILDNVKARGDEALREYSAKFDKTTVTALKVSAEEIAAASERLSDELKQAMAVAVKNIETFHTAQKLPPVDVETQPGVRCQQVTRPVASVGLYIPGGSAPLFSTVLMLATPARIAGCKKVVLCSPPPIADEILYAAQLCGVQDVFNVGGAQAIAALAFGTESVPKVDKIFGPGNAFVTEAKRQVSQRLDGAAIDMPAGPSEVLVIADSGATPDFVASDLLSQAEHGPDSQVILLTPAADMARRVAEAVERQLAELPRAETARQALNASRLIVTKDLAQCVEISNQYGPEHLIIQTRNARDLVDGITSAGSVFLGDWSLESAGDYASGTNHVLPTYGYTATCSSLGLADFQKRMTVQELSKEGFSALASTIETLAAAERLTAHKNAVTLRVNALKEQA</sequence>
<feature type="chain" id="PRO_0000135842" description="Histidinol dehydrogenase">
    <location>
        <begin position="1"/>
        <end position="434"/>
    </location>
</feature>
<feature type="active site" description="Proton acceptor" evidence="1">
    <location>
        <position position="326"/>
    </location>
</feature>
<feature type="active site" description="Proton acceptor" evidence="1">
    <location>
        <position position="327"/>
    </location>
</feature>
<feature type="binding site" evidence="1">
    <location>
        <position position="130"/>
    </location>
    <ligand>
        <name>NAD(+)</name>
        <dbReference type="ChEBI" id="CHEBI:57540"/>
    </ligand>
</feature>
<feature type="binding site" evidence="1">
    <location>
        <position position="188"/>
    </location>
    <ligand>
        <name>NAD(+)</name>
        <dbReference type="ChEBI" id="CHEBI:57540"/>
    </ligand>
</feature>
<feature type="binding site" evidence="1">
    <location>
        <position position="211"/>
    </location>
    <ligand>
        <name>NAD(+)</name>
        <dbReference type="ChEBI" id="CHEBI:57540"/>
    </ligand>
</feature>
<feature type="binding site" evidence="1">
    <location>
        <position position="237"/>
    </location>
    <ligand>
        <name>substrate</name>
    </ligand>
</feature>
<feature type="binding site" evidence="1">
    <location>
        <position position="259"/>
    </location>
    <ligand>
        <name>substrate</name>
    </ligand>
</feature>
<feature type="binding site" evidence="1">
    <location>
        <position position="259"/>
    </location>
    <ligand>
        <name>Zn(2+)</name>
        <dbReference type="ChEBI" id="CHEBI:29105"/>
    </ligand>
</feature>
<feature type="binding site" evidence="1">
    <location>
        <position position="262"/>
    </location>
    <ligand>
        <name>substrate</name>
    </ligand>
</feature>
<feature type="binding site" evidence="1">
    <location>
        <position position="262"/>
    </location>
    <ligand>
        <name>Zn(2+)</name>
        <dbReference type="ChEBI" id="CHEBI:29105"/>
    </ligand>
</feature>
<feature type="binding site" evidence="1">
    <location>
        <position position="327"/>
    </location>
    <ligand>
        <name>substrate</name>
    </ligand>
</feature>
<feature type="binding site" evidence="1">
    <location>
        <position position="360"/>
    </location>
    <ligand>
        <name>substrate</name>
    </ligand>
</feature>
<feature type="binding site" evidence="1">
    <location>
        <position position="360"/>
    </location>
    <ligand>
        <name>Zn(2+)</name>
        <dbReference type="ChEBI" id="CHEBI:29105"/>
    </ligand>
</feature>
<feature type="binding site" evidence="1">
    <location>
        <position position="414"/>
    </location>
    <ligand>
        <name>substrate</name>
    </ligand>
</feature>
<feature type="binding site" evidence="1">
    <location>
        <position position="419"/>
    </location>
    <ligand>
        <name>substrate</name>
    </ligand>
</feature>
<feature type="binding site" evidence="1">
    <location>
        <position position="419"/>
    </location>
    <ligand>
        <name>Zn(2+)</name>
        <dbReference type="ChEBI" id="CHEBI:29105"/>
    </ligand>
</feature>
<gene>
    <name evidence="1" type="primary">hisD</name>
    <name type="ordered locus">SBO_0846</name>
</gene>
<protein>
    <recommendedName>
        <fullName evidence="1">Histidinol dehydrogenase</fullName>
        <shortName evidence="1">HDH</shortName>
        <ecNumber evidence="1">1.1.1.23</ecNumber>
    </recommendedName>
</protein>
<proteinExistence type="inferred from homology"/>
<dbReference type="EC" id="1.1.1.23" evidence="1"/>
<dbReference type="EMBL" id="CP000036">
    <property type="protein sequence ID" value="ABB65516.1"/>
    <property type="molecule type" value="Genomic_DNA"/>
</dbReference>
<dbReference type="RefSeq" id="WP_004982070.1">
    <property type="nucleotide sequence ID" value="NC_007613.1"/>
</dbReference>
<dbReference type="SMR" id="Q323J2"/>
<dbReference type="KEGG" id="sbo:SBO_0846"/>
<dbReference type="HOGENOM" id="CLU_006732_3_0_6"/>
<dbReference type="UniPathway" id="UPA00031">
    <property type="reaction ID" value="UER00014"/>
</dbReference>
<dbReference type="Proteomes" id="UP000007067">
    <property type="component" value="Chromosome"/>
</dbReference>
<dbReference type="GO" id="GO:0005829">
    <property type="term" value="C:cytosol"/>
    <property type="evidence" value="ECO:0007669"/>
    <property type="project" value="TreeGrafter"/>
</dbReference>
<dbReference type="GO" id="GO:0004399">
    <property type="term" value="F:histidinol dehydrogenase activity"/>
    <property type="evidence" value="ECO:0007669"/>
    <property type="project" value="UniProtKB-UniRule"/>
</dbReference>
<dbReference type="GO" id="GO:0051287">
    <property type="term" value="F:NAD binding"/>
    <property type="evidence" value="ECO:0007669"/>
    <property type="project" value="InterPro"/>
</dbReference>
<dbReference type="GO" id="GO:0008270">
    <property type="term" value="F:zinc ion binding"/>
    <property type="evidence" value="ECO:0007669"/>
    <property type="project" value="UniProtKB-UniRule"/>
</dbReference>
<dbReference type="GO" id="GO:0000105">
    <property type="term" value="P:L-histidine biosynthetic process"/>
    <property type="evidence" value="ECO:0007669"/>
    <property type="project" value="UniProtKB-UniRule"/>
</dbReference>
<dbReference type="CDD" id="cd06572">
    <property type="entry name" value="Histidinol_dh"/>
    <property type="match status" value="1"/>
</dbReference>
<dbReference type="FunFam" id="1.20.5.1300:FF:000001">
    <property type="entry name" value="Histidine biosynthesis trifunctional protein"/>
    <property type="match status" value="1"/>
</dbReference>
<dbReference type="FunFam" id="3.40.50.1980:FF:000001">
    <property type="entry name" value="Histidinol dehydrogenase"/>
    <property type="match status" value="1"/>
</dbReference>
<dbReference type="Gene3D" id="1.20.5.1300">
    <property type="match status" value="1"/>
</dbReference>
<dbReference type="Gene3D" id="3.40.50.1980">
    <property type="entry name" value="Nitrogenase molybdenum iron protein domain"/>
    <property type="match status" value="2"/>
</dbReference>
<dbReference type="HAMAP" id="MF_01024">
    <property type="entry name" value="HisD"/>
    <property type="match status" value="1"/>
</dbReference>
<dbReference type="InterPro" id="IPR016161">
    <property type="entry name" value="Ald_DH/histidinol_DH"/>
</dbReference>
<dbReference type="InterPro" id="IPR001692">
    <property type="entry name" value="Histidinol_DH_CS"/>
</dbReference>
<dbReference type="InterPro" id="IPR022695">
    <property type="entry name" value="Histidinol_DH_monofunct"/>
</dbReference>
<dbReference type="InterPro" id="IPR012131">
    <property type="entry name" value="Hstdl_DH"/>
</dbReference>
<dbReference type="NCBIfam" id="TIGR00069">
    <property type="entry name" value="hisD"/>
    <property type="match status" value="1"/>
</dbReference>
<dbReference type="PANTHER" id="PTHR21256:SF2">
    <property type="entry name" value="HISTIDINE BIOSYNTHESIS TRIFUNCTIONAL PROTEIN"/>
    <property type="match status" value="1"/>
</dbReference>
<dbReference type="PANTHER" id="PTHR21256">
    <property type="entry name" value="HISTIDINOL DEHYDROGENASE HDH"/>
    <property type="match status" value="1"/>
</dbReference>
<dbReference type="Pfam" id="PF00815">
    <property type="entry name" value="Histidinol_dh"/>
    <property type="match status" value="1"/>
</dbReference>
<dbReference type="PIRSF" id="PIRSF000099">
    <property type="entry name" value="Histidinol_dh"/>
    <property type="match status" value="1"/>
</dbReference>
<dbReference type="PRINTS" id="PR00083">
    <property type="entry name" value="HOLDHDRGNASE"/>
</dbReference>
<dbReference type="SUPFAM" id="SSF53720">
    <property type="entry name" value="ALDH-like"/>
    <property type="match status" value="1"/>
</dbReference>
<dbReference type="PROSITE" id="PS00611">
    <property type="entry name" value="HISOL_DEHYDROGENASE"/>
    <property type="match status" value="1"/>
</dbReference>
<keyword id="KW-0028">Amino-acid biosynthesis</keyword>
<keyword id="KW-0368">Histidine biosynthesis</keyword>
<keyword id="KW-0479">Metal-binding</keyword>
<keyword id="KW-0520">NAD</keyword>
<keyword id="KW-0560">Oxidoreductase</keyword>
<keyword id="KW-0862">Zinc</keyword>
<organism>
    <name type="scientific">Shigella boydii serotype 4 (strain Sb227)</name>
    <dbReference type="NCBI Taxonomy" id="300268"/>
    <lineage>
        <taxon>Bacteria</taxon>
        <taxon>Pseudomonadati</taxon>
        <taxon>Pseudomonadota</taxon>
        <taxon>Gammaproteobacteria</taxon>
        <taxon>Enterobacterales</taxon>
        <taxon>Enterobacteriaceae</taxon>
        <taxon>Shigella</taxon>
    </lineage>
</organism>
<accession>Q323J2</accession>
<name>HISX_SHIBS</name>
<evidence type="ECO:0000255" key="1">
    <source>
        <dbReference type="HAMAP-Rule" id="MF_01024"/>
    </source>
</evidence>
<comment type="function">
    <text evidence="1">Catalyzes the sequential NAD-dependent oxidations of L-histidinol to L-histidinaldehyde and then to L-histidine.</text>
</comment>
<comment type="catalytic activity">
    <reaction evidence="1">
        <text>L-histidinol + 2 NAD(+) + H2O = L-histidine + 2 NADH + 3 H(+)</text>
        <dbReference type="Rhea" id="RHEA:20641"/>
        <dbReference type="ChEBI" id="CHEBI:15377"/>
        <dbReference type="ChEBI" id="CHEBI:15378"/>
        <dbReference type="ChEBI" id="CHEBI:57540"/>
        <dbReference type="ChEBI" id="CHEBI:57595"/>
        <dbReference type="ChEBI" id="CHEBI:57699"/>
        <dbReference type="ChEBI" id="CHEBI:57945"/>
        <dbReference type="EC" id="1.1.1.23"/>
    </reaction>
</comment>
<comment type="cofactor">
    <cofactor evidence="1">
        <name>Zn(2+)</name>
        <dbReference type="ChEBI" id="CHEBI:29105"/>
    </cofactor>
    <text evidence="1">Binds 1 zinc ion per subunit.</text>
</comment>
<comment type="pathway">
    <text evidence="1">Amino-acid biosynthesis; L-histidine biosynthesis; L-histidine from 5-phospho-alpha-D-ribose 1-diphosphate: step 9/9.</text>
</comment>
<comment type="subunit">
    <text evidence="1">Homodimer.</text>
</comment>
<comment type="similarity">
    <text evidence="1">Belongs to the histidinol dehydrogenase family.</text>
</comment>